<evidence type="ECO:0000305" key="1"/>
<evidence type="ECO:0007829" key="2">
    <source>
        <dbReference type="PDB" id="2Z3X"/>
    </source>
</evidence>
<name>SSPC_BACSU</name>
<feature type="chain" id="PRO_0000196301" description="Small, acid-soluble spore protein C">
    <location>
        <begin position="1"/>
        <end position="72"/>
    </location>
</feature>
<feature type="site" description="Cleavage; by spore protease">
    <location>
        <begin position="30"/>
        <end position="31"/>
    </location>
</feature>
<feature type="helix" evidence="2">
    <location>
        <begin position="18"/>
        <end position="20"/>
    </location>
</feature>
<feature type="helix" evidence="2">
    <location>
        <begin position="21"/>
        <end position="35"/>
    </location>
</feature>
<feature type="helix" evidence="2">
    <location>
        <begin position="45"/>
        <end position="65"/>
    </location>
</feature>
<keyword id="KW-0002">3D-structure</keyword>
<keyword id="KW-0238">DNA-binding</keyword>
<keyword id="KW-1185">Reference proteome</keyword>
<keyword id="KW-0749">Sporulation</keyword>
<protein>
    <recommendedName>
        <fullName>Small, acid-soluble spore protein C</fullName>
        <shortName>SASP</shortName>
    </recommendedName>
</protein>
<organism>
    <name type="scientific">Bacillus subtilis (strain 168)</name>
    <dbReference type="NCBI Taxonomy" id="224308"/>
    <lineage>
        <taxon>Bacteria</taxon>
        <taxon>Bacillati</taxon>
        <taxon>Bacillota</taxon>
        <taxon>Bacilli</taxon>
        <taxon>Bacillales</taxon>
        <taxon>Bacillaceae</taxon>
        <taxon>Bacillus</taxon>
    </lineage>
</organism>
<sequence length="72" mass="7758">MAQQSRSRSNNNNDLLIPQAASAIEQMKLEIASEFGVQLGAETTSRANGSVGGEITKRLVRLAQQNMGGQFH</sequence>
<dbReference type="EMBL" id="K02968">
    <property type="protein sequence ID" value="AAA22737.1"/>
    <property type="molecule type" value="Genomic_DNA"/>
</dbReference>
<dbReference type="EMBL" id="AF012906">
    <property type="protein sequence ID" value="AAB92494.1"/>
    <property type="molecule type" value="Genomic_DNA"/>
</dbReference>
<dbReference type="EMBL" id="AL009126">
    <property type="protein sequence ID" value="CAB13886.1"/>
    <property type="molecule type" value="Genomic_DNA"/>
</dbReference>
<dbReference type="PIR" id="A03476">
    <property type="entry name" value="USBS1"/>
</dbReference>
<dbReference type="RefSeq" id="NP_389876.1">
    <property type="nucleotide sequence ID" value="NC_000964.3"/>
</dbReference>
<dbReference type="RefSeq" id="WP_009967454.1">
    <property type="nucleotide sequence ID" value="NZ_OZ025638.1"/>
</dbReference>
<dbReference type="PDB" id="2Z3X">
    <property type="method" value="X-ray"/>
    <property type="resolution" value="2.10 A"/>
    <property type="chains" value="A/B/C=13-72"/>
</dbReference>
<dbReference type="PDBsum" id="2Z3X"/>
<dbReference type="SMR" id="P02958"/>
<dbReference type="DIP" id="DIP-29747N"/>
<dbReference type="FunCoup" id="P02958">
    <property type="interactions" value="83"/>
</dbReference>
<dbReference type="STRING" id="224308.BSU19950"/>
<dbReference type="PaxDb" id="224308-BSU19950"/>
<dbReference type="EnsemblBacteria" id="CAB13886">
    <property type="protein sequence ID" value="CAB13886"/>
    <property type="gene ID" value="BSU_19950"/>
</dbReference>
<dbReference type="GeneID" id="939473"/>
<dbReference type="KEGG" id="bsu:BSU19950"/>
<dbReference type="PATRIC" id="fig|224308.179.peg.2183"/>
<dbReference type="eggNOG" id="ENOG5032YCI">
    <property type="taxonomic scope" value="Bacteria"/>
</dbReference>
<dbReference type="InParanoid" id="P02958"/>
<dbReference type="OrthoDB" id="2627848at2"/>
<dbReference type="PhylomeDB" id="P02958"/>
<dbReference type="BioCyc" id="BSUB:BSU19950-MONOMER"/>
<dbReference type="EvolutionaryTrace" id="P02958"/>
<dbReference type="Proteomes" id="UP000001570">
    <property type="component" value="Chromosome"/>
</dbReference>
<dbReference type="GO" id="GO:0003690">
    <property type="term" value="F:double-stranded DNA binding"/>
    <property type="evidence" value="ECO:0007669"/>
    <property type="project" value="InterPro"/>
</dbReference>
<dbReference type="GO" id="GO:0006265">
    <property type="term" value="P:DNA topological change"/>
    <property type="evidence" value="ECO:0007669"/>
    <property type="project" value="InterPro"/>
</dbReference>
<dbReference type="GO" id="GO:0030435">
    <property type="term" value="P:sporulation resulting in formation of a cellular spore"/>
    <property type="evidence" value="ECO:0007669"/>
    <property type="project" value="UniProtKB-KW"/>
</dbReference>
<dbReference type="Gene3D" id="6.10.10.80">
    <property type="entry name" value="Small, acid-soluble spore protein, alpha/beta type-like"/>
    <property type="match status" value="1"/>
</dbReference>
<dbReference type="InterPro" id="IPR001448">
    <property type="entry name" value="SASP_alpha/beta-type"/>
</dbReference>
<dbReference type="InterPro" id="IPR018126">
    <property type="entry name" value="SASP_alpha/beta-type_CS"/>
</dbReference>
<dbReference type="InterPro" id="IPR050847">
    <property type="entry name" value="SASP_DNA-binding"/>
</dbReference>
<dbReference type="InterPro" id="IPR038300">
    <property type="entry name" value="SASP_sf_alpha/beta"/>
</dbReference>
<dbReference type="PANTHER" id="PTHR36107">
    <property type="entry name" value="SMALL, ACID-SOLUBLE SPORE PROTEIN A"/>
    <property type="match status" value="1"/>
</dbReference>
<dbReference type="PANTHER" id="PTHR36107:SF1">
    <property type="entry name" value="SMALL, ACID-SOLUBLE SPORE PROTEIN A"/>
    <property type="match status" value="1"/>
</dbReference>
<dbReference type="Pfam" id="PF00269">
    <property type="entry name" value="SASP"/>
    <property type="match status" value="1"/>
</dbReference>
<dbReference type="PROSITE" id="PS00304">
    <property type="entry name" value="SASP_1"/>
    <property type="match status" value="1"/>
</dbReference>
<dbReference type="PROSITE" id="PS00684">
    <property type="entry name" value="SASP_2"/>
    <property type="match status" value="1"/>
</dbReference>
<reference key="1">
    <citation type="journal article" date="1985" name="J. Bacteriol.">
        <title>Cloning of a small, acid-soluble spore protein gene from Bacillus subtilis and determination of its complete nucleotide sequence.</title>
        <authorList>
            <person name="Connors M.J."/>
            <person name="Setlow P."/>
        </authorList>
    </citation>
    <scope>NUCLEOTIDE SEQUENCE [GENOMIC DNA]</scope>
</reference>
<reference key="2">
    <citation type="journal article" date="1998" name="DNA Res.">
        <title>An 8 kb nucleotide sequence at the 3' flanking region of the sspC gene (184 degrees) on the Bacillus subtilis 168 chromosome containing an intein and an intron.</title>
        <authorList>
            <person name="Ghim S.-Y."/>
            <person name="Choi S.-K."/>
            <person name="Shin B.-S."/>
            <person name="Park S.-H."/>
        </authorList>
    </citation>
    <scope>NUCLEOTIDE SEQUENCE [GENOMIC DNA]</scope>
    <source>
        <strain>168</strain>
    </source>
</reference>
<reference key="3">
    <citation type="journal article" date="1997" name="Nature">
        <title>The complete genome sequence of the Gram-positive bacterium Bacillus subtilis.</title>
        <authorList>
            <person name="Kunst F."/>
            <person name="Ogasawara N."/>
            <person name="Moszer I."/>
            <person name="Albertini A.M."/>
            <person name="Alloni G."/>
            <person name="Azevedo V."/>
            <person name="Bertero M.G."/>
            <person name="Bessieres P."/>
            <person name="Bolotin A."/>
            <person name="Borchert S."/>
            <person name="Borriss R."/>
            <person name="Boursier L."/>
            <person name="Brans A."/>
            <person name="Braun M."/>
            <person name="Brignell S.C."/>
            <person name="Bron S."/>
            <person name="Brouillet S."/>
            <person name="Bruschi C.V."/>
            <person name="Caldwell B."/>
            <person name="Capuano V."/>
            <person name="Carter N.M."/>
            <person name="Choi S.-K."/>
            <person name="Codani J.-J."/>
            <person name="Connerton I.F."/>
            <person name="Cummings N.J."/>
            <person name="Daniel R.A."/>
            <person name="Denizot F."/>
            <person name="Devine K.M."/>
            <person name="Duesterhoeft A."/>
            <person name="Ehrlich S.D."/>
            <person name="Emmerson P.T."/>
            <person name="Entian K.-D."/>
            <person name="Errington J."/>
            <person name="Fabret C."/>
            <person name="Ferrari E."/>
            <person name="Foulger D."/>
            <person name="Fritz C."/>
            <person name="Fujita M."/>
            <person name="Fujita Y."/>
            <person name="Fuma S."/>
            <person name="Galizzi A."/>
            <person name="Galleron N."/>
            <person name="Ghim S.-Y."/>
            <person name="Glaser P."/>
            <person name="Goffeau A."/>
            <person name="Golightly E.J."/>
            <person name="Grandi G."/>
            <person name="Guiseppi G."/>
            <person name="Guy B.J."/>
            <person name="Haga K."/>
            <person name="Haiech J."/>
            <person name="Harwood C.R."/>
            <person name="Henaut A."/>
            <person name="Hilbert H."/>
            <person name="Holsappel S."/>
            <person name="Hosono S."/>
            <person name="Hullo M.-F."/>
            <person name="Itaya M."/>
            <person name="Jones L.-M."/>
            <person name="Joris B."/>
            <person name="Karamata D."/>
            <person name="Kasahara Y."/>
            <person name="Klaerr-Blanchard M."/>
            <person name="Klein C."/>
            <person name="Kobayashi Y."/>
            <person name="Koetter P."/>
            <person name="Koningstein G."/>
            <person name="Krogh S."/>
            <person name="Kumano M."/>
            <person name="Kurita K."/>
            <person name="Lapidus A."/>
            <person name="Lardinois S."/>
            <person name="Lauber J."/>
            <person name="Lazarevic V."/>
            <person name="Lee S.-M."/>
            <person name="Levine A."/>
            <person name="Liu H."/>
            <person name="Masuda S."/>
            <person name="Mauel C."/>
            <person name="Medigue C."/>
            <person name="Medina N."/>
            <person name="Mellado R.P."/>
            <person name="Mizuno M."/>
            <person name="Moestl D."/>
            <person name="Nakai S."/>
            <person name="Noback M."/>
            <person name="Noone D."/>
            <person name="O'Reilly M."/>
            <person name="Ogawa K."/>
            <person name="Ogiwara A."/>
            <person name="Oudega B."/>
            <person name="Park S.-H."/>
            <person name="Parro V."/>
            <person name="Pohl T.M."/>
            <person name="Portetelle D."/>
            <person name="Porwollik S."/>
            <person name="Prescott A.M."/>
            <person name="Presecan E."/>
            <person name="Pujic P."/>
            <person name="Purnelle B."/>
            <person name="Rapoport G."/>
            <person name="Rey M."/>
            <person name="Reynolds S."/>
            <person name="Rieger M."/>
            <person name="Rivolta C."/>
            <person name="Rocha E."/>
            <person name="Roche B."/>
            <person name="Rose M."/>
            <person name="Sadaie Y."/>
            <person name="Sato T."/>
            <person name="Scanlan E."/>
            <person name="Schleich S."/>
            <person name="Schroeter R."/>
            <person name="Scoffone F."/>
            <person name="Sekiguchi J."/>
            <person name="Sekowska A."/>
            <person name="Seror S.J."/>
            <person name="Serror P."/>
            <person name="Shin B.-S."/>
            <person name="Soldo B."/>
            <person name="Sorokin A."/>
            <person name="Tacconi E."/>
            <person name="Takagi T."/>
            <person name="Takahashi H."/>
            <person name="Takemaru K."/>
            <person name="Takeuchi M."/>
            <person name="Tamakoshi A."/>
            <person name="Tanaka T."/>
            <person name="Terpstra P."/>
            <person name="Tognoni A."/>
            <person name="Tosato V."/>
            <person name="Uchiyama S."/>
            <person name="Vandenbol M."/>
            <person name="Vannier F."/>
            <person name="Vassarotti A."/>
            <person name="Viari A."/>
            <person name="Wambutt R."/>
            <person name="Wedler E."/>
            <person name="Wedler H."/>
            <person name="Weitzenegger T."/>
            <person name="Winters P."/>
            <person name="Wipat A."/>
            <person name="Yamamoto H."/>
            <person name="Yamane K."/>
            <person name="Yasumoto K."/>
            <person name="Yata K."/>
            <person name="Yoshida K."/>
            <person name="Yoshikawa H.-F."/>
            <person name="Zumstein E."/>
            <person name="Yoshikawa H."/>
            <person name="Danchin A."/>
        </authorList>
    </citation>
    <scope>NUCLEOTIDE SEQUENCE [LARGE SCALE GENOMIC DNA]</scope>
    <source>
        <strain>168</strain>
    </source>
</reference>
<comment type="function">
    <text>SASP are bound to spore DNA. They are double-stranded DNA-binding proteins that cause DNA to change to an a-like conformation. They protect the DNA backbone from chemical and enzymatic cleavage and are thus involved in dormant spore's high resistance to UV light.</text>
</comment>
<comment type="miscellaneous">
    <text>SASP are degraded in the first minutes of spore germination and provide amino acids for both new protein synthesis and metabolism.</text>
</comment>
<comment type="similarity">
    <text evidence="1">Belongs to the alpha/beta-type SASP family.</text>
</comment>
<proteinExistence type="evidence at protein level"/>
<accession>P02958</accession>
<gene>
    <name type="primary">sspC</name>
    <name type="ordered locus">BSU19950</name>
</gene>